<reference evidence="5" key="1">
    <citation type="journal article" date="2005" name="Peptides">
        <title>Peptidomics of neurohemal organs from species of the cockroach family Blattidae: how do neuropeptides of closely related species differ?</title>
        <authorList>
            <person name="Predel R."/>
            <person name="Gaede G."/>
        </authorList>
    </citation>
    <scope>PROTEIN SEQUENCE</scope>
    <scope>MASS SPECTROMETRY</scope>
    <scope>AMIDATION AT LEU-14</scope>
    <source>
        <tissue evidence="3">Corpora allata</tissue>
    </source>
</reference>
<reference evidence="5" key="2">
    <citation type="submission" date="2004-11" db="UniProtKB">
        <authorList>
            <person name="Predel R."/>
            <person name="Gaede G."/>
        </authorList>
    </citation>
    <scope>SUBCELLULAR LOCATION</scope>
    <scope>TISSUE SPECIFICITY</scope>
</reference>
<sequence>SDPEVPGMWFGPRL</sequence>
<comment type="function">
    <text evidence="1">Myoactive.</text>
</comment>
<comment type="subcellular location">
    <subcellularLocation>
        <location evidence="4">Secreted</location>
    </subcellularLocation>
</comment>
<comment type="tissue specificity">
    <text evidence="4">Expressed in the brain, subesophageal ganglion and in the retrocerebral complex (mainly corpora cardiaca).</text>
</comment>
<comment type="mass spectrometry"/>
<comment type="similarity">
    <text evidence="2">Belongs to the pyrokinin family.</text>
</comment>
<name>PPK6_DERER</name>
<feature type="peptide" id="PRO_0000044355" description="Pyrokinin-6">
    <location>
        <begin position="1"/>
        <end position="14"/>
    </location>
</feature>
<feature type="modified residue" description="Leucine amide" evidence="3">
    <location>
        <position position="14"/>
    </location>
</feature>
<keyword id="KW-0027">Amidation</keyword>
<keyword id="KW-0903">Direct protein sequencing</keyword>
<keyword id="KW-0527">Neuropeptide</keyword>
<keyword id="KW-0964">Secreted</keyword>
<evidence type="ECO:0000250" key="1">
    <source>
        <dbReference type="UniProtKB" id="P82693"/>
    </source>
</evidence>
<evidence type="ECO:0000255" key="2"/>
<evidence type="ECO:0000269" key="3">
    <source>
    </source>
</evidence>
<evidence type="ECO:0000269" key="4">
    <source ref="2"/>
</evidence>
<evidence type="ECO:0000305" key="5"/>
<protein>
    <recommendedName>
        <fullName>Pyrokinin-6</fullName>
    </recommendedName>
    <alternativeName>
        <fullName>FXPRL-amide</fullName>
    </alternativeName>
</protein>
<organism>
    <name type="scientific">Deropeltis erythrocephala</name>
    <name type="common">Black velvet roach</name>
    <dbReference type="NCBI Taxonomy" id="303918"/>
    <lineage>
        <taxon>Eukaryota</taxon>
        <taxon>Metazoa</taxon>
        <taxon>Ecdysozoa</taxon>
        <taxon>Arthropoda</taxon>
        <taxon>Hexapoda</taxon>
        <taxon>Insecta</taxon>
        <taxon>Pterygota</taxon>
        <taxon>Neoptera</taxon>
        <taxon>Polyneoptera</taxon>
        <taxon>Dictyoptera</taxon>
        <taxon>Blattodea</taxon>
        <taxon>Blattoidea</taxon>
        <taxon>Blattidae</taxon>
        <taxon>Blattinae</taxon>
        <taxon>Deropeltis</taxon>
    </lineage>
</organism>
<proteinExistence type="evidence at protein level"/>
<dbReference type="GO" id="GO:0005576">
    <property type="term" value="C:extracellular region"/>
    <property type="evidence" value="ECO:0007669"/>
    <property type="project" value="UniProtKB-SubCell"/>
</dbReference>
<dbReference type="GO" id="GO:0005184">
    <property type="term" value="F:neuropeptide hormone activity"/>
    <property type="evidence" value="ECO:0007669"/>
    <property type="project" value="InterPro"/>
</dbReference>
<dbReference type="GO" id="GO:0007218">
    <property type="term" value="P:neuropeptide signaling pathway"/>
    <property type="evidence" value="ECO:0007669"/>
    <property type="project" value="UniProtKB-KW"/>
</dbReference>
<dbReference type="InterPro" id="IPR001484">
    <property type="entry name" value="Pyrokinin_CS"/>
</dbReference>
<dbReference type="PROSITE" id="PS00539">
    <property type="entry name" value="PYROKININ"/>
    <property type="match status" value="1"/>
</dbReference>
<accession>P84363</accession>